<gene>
    <name type="primary">speA</name>
    <name type="ordered locus">spyM18_0393</name>
</gene>
<sequence length="251" mass="29246">MENNKKVLKKMVFFVLVTFLGLTISQEVFAQQDPDPSQLHRSSLVKNLQNIYFLYEGDPVTHENVKSVDQLLSHDLIYNVSGPNYDKLKTELKNQEMATLFKDKNVDIYGVEYYHLCYLCENAERSACIYGGVTNHEGNHLEIPKKIVVKVSIDGIQSLSFDIETNKKMVTAQELDYKVRKYLTDNKQLYTNGPSKYETGYIKFIPKNKESFWFDFFPEPEFTQSKYLMIYKDNETLDSNTSQIEVYLTTK</sequence>
<keyword id="KW-0002">3D-structure</keyword>
<keyword id="KW-1015">Disulfide bond</keyword>
<keyword id="KW-0732">Signal</keyword>
<keyword id="KW-0800">Toxin</keyword>
<keyword id="KW-0843">Virulence</keyword>
<feature type="signal peptide" evidence="1">
    <location>
        <begin position="1"/>
        <end position="30"/>
    </location>
</feature>
<feature type="chain" id="PRO_0000035597" description="Exotoxin type A">
    <location>
        <begin position="31"/>
        <end position="251"/>
    </location>
</feature>
<feature type="disulfide bond" evidence="2">
    <location>
        <begin position="117"/>
        <end position="128"/>
    </location>
</feature>
<reference key="1">
    <citation type="journal article" date="2002" name="Proc. Natl. Acad. Sci. U.S.A.">
        <title>Genome sequence and comparative microarray analysis of serotype M18 group A Streptococcus strains associated with acute rheumatic fever outbreaks.</title>
        <authorList>
            <person name="Smoot J.C."/>
            <person name="Barbian K.D."/>
            <person name="Van Gompel J.J."/>
            <person name="Smoot L.M."/>
            <person name="Chaussee M.S."/>
            <person name="Sylva G.L."/>
            <person name="Sturdevant D.E."/>
            <person name="Ricklefs S.M."/>
            <person name="Porcella S.F."/>
            <person name="Parkins L.D."/>
            <person name="Beres S.B."/>
            <person name="Campbell D.S."/>
            <person name="Smith T.M."/>
            <person name="Zhang Q."/>
            <person name="Kapur V."/>
            <person name="Daly J.A."/>
            <person name="Veasy L.G."/>
            <person name="Musser J.M."/>
        </authorList>
    </citation>
    <scope>NUCLEOTIDE SEQUENCE [LARGE SCALE GENOMIC DNA]</scope>
    <source>
        <strain>MGAS8232</strain>
    </source>
</reference>
<reference key="2">
    <citation type="journal article" date="2002" name="Structure">
        <title>Structures of two streptococcal superantigens bound to TCR beta chains reveal diversity in the architecture of T cell signaling complexes.</title>
        <authorList>
            <person name="Sundberg E.J."/>
            <person name="Li H."/>
            <person name="Llera A.S."/>
            <person name="McCormick J.K."/>
            <person name="Tormo J."/>
            <person name="Schlievert P.M."/>
            <person name="Karjalainen K."/>
            <person name="Mariuzza R.A."/>
        </authorList>
    </citation>
    <scope>X-RAY CRYSTALLOGRAPHY (2.5 ANGSTROMS) OF 31-251 IN COMPLEX WITH MOUSE TCR BETA</scope>
    <scope>DISULFIDE BOND</scope>
</reference>
<protein>
    <recommendedName>
        <fullName>Exotoxin type A</fullName>
    </recommendedName>
    <alternativeName>
        <fullName>Erythrogenic toxin</fullName>
    </alternativeName>
    <alternativeName>
        <fullName>SPE A</fullName>
    </alternativeName>
    <alternativeName>
        <fullName>Scarlet fever toxin</fullName>
    </alternativeName>
</protein>
<organism>
    <name type="scientific">Streptococcus pyogenes serotype M18 (strain MGAS8232)</name>
    <dbReference type="NCBI Taxonomy" id="186103"/>
    <lineage>
        <taxon>Bacteria</taxon>
        <taxon>Bacillati</taxon>
        <taxon>Bacillota</taxon>
        <taxon>Bacilli</taxon>
        <taxon>Lactobacillales</taxon>
        <taxon>Streptococcaceae</taxon>
        <taxon>Streptococcus</taxon>
    </lineage>
</organism>
<accession>P62561</accession>
<accession>P08095</accession>
<comment type="function">
    <text evidence="1">Causative agent of the symptoms associated with scarlet fever, have been associated with streptococcal toxic shock-like disease and may play a role in the early events of rheumatic fever.</text>
</comment>
<comment type="miscellaneous">
    <text evidence="1">Binds to major histocompatibility complex class II beta chain.</text>
</comment>
<comment type="similarity">
    <text evidence="3">Belongs to the staphylococcal/streptococcal toxin family.</text>
</comment>
<name>SPEA_STRP8</name>
<proteinExistence type="evidence at protein level"/>
<evidence type="ECO:0000250" key="1"/>
<evidence type="ECO:0000269" key="2">
    <source>
    </source>
</evidence>
<evidence type="ECO:0000305" key="3"/>
<dbReference type="EMBL" id="AE009949">
    <property type="protein sequence ID" value="AAL97141.1"/>
    <property type="molecule type" value="Genomic_DNA"/>
</dbReference>
<dbReference type="RefSeq" id="WP_009880239.1">
    <property type="nucleotide sequence ID" value="NC_003485.1"/>
</dbReference>
<dbReference type="PDB" id="1L0Y">
    <property type="method" value="X-ray"/>
    <property type="resolution" value="2.50 A"/>
    <property type="chains" value="B/D=31-251"/>
</dbReference>
<dbReference type="PDBsum" id="1L0Y"/>
<dbReference type="SMR" id="P62561"/>
<dbReference type="Allergome" id="8278">
    <property type="allergen name" value="Str py SPEA"/>
</dbReference>
<dbReference type="KEGG" id="spm:spyM18_0393"/>
<dbReference type="HOGENOM" id="CLU_093855_0_1_9"/>
<dbReference type="GO" id="GO:0005576">
    <property type="term" value="C:extracellular region"/>
    <property type="evidence" value="ECO:0007669"/>
    <property type="project" value="InterPro"/>
</dbReference>
<dbReference type="GO" id="GO:0090729">
    <property type="term" value="F:toxin activity"/>
    <property type="evidence" value="ECO:0007669"/>
    <property type="project" value="UniProtKB-KW"/>
</dbReference>
<dbReference type="Gene3D" id="2.40.50.110">
    <property type="match status" value="1"/>
</dbReference>
<dbReference type="Gene3D" id="3.10.20.120">
    <property type="match status" value="1"/>
</dbReference>
<dbReference type="InterPro" id="IPR008992">
    <property type="entry name" value="Enterotoxin"/>
</dbReference>
<dbReference type="InterPro" id="IPR006126">
    <property type="entry name" value="Staph/Strept_toxin_CS"/>
</dbReference>
<dbReference type="InterPro" id="IPR006173">
    <property type="entry name" value="Staph_tox_OB"/>
</dbReference>
<dbReference type="InterPro" id="IPR016091">
    <property type="entry name" value="SuperAg_toxin_C"/>
</dbReference>
<dbReference type="InterPro" id="IPR013307">
    <property type="entry name" value="Superantigen_bac"/>
</dbReference>
<dbReference type="InterPro" id="IPR006123">
    <property type="entry name" value="Toxin_b-grasp_Staph/Strep"/>
</dbReference>
<dbReference type="InterPro" id="IPR006177">
    <property type="entry name" value="Toxin_bac"/>
</dbReference>
<dbReference type="Pfam" id="PF02876">
    <property type="entry name" value="Stap_Strp_tox_C"/>
    <property type="match status" value="1"/>
</dbReference>
<dbReference type="Pfam" id="PF01123">
    <property type="entry name" value="Stap_Strp_toxin"/>
    <property type="match status" value="1"/>
</dbReference>
<dbReference type="PRINTS" id="PR00279">
    <property type="entry name" value="BACTRLTOXIN"/>
</dbReference>
<dbReference type="PRINTS" id="PR01898">
    <property type="entry name" value="SAGSUPRFAMLY"/>
</dbReference>
<dbReference type="SUPFAM" id="SSF50203">
    <property type="entry name" value="Bacterial enterotoxins"/>
    <property type="match status" value="1"/>
</dbReference>
<dbReference type="SUPFAM" id="SSF54334">
    <property type="entry name" value="Superantigen toxins, C-terminal domain"/>
    <property type="match status" value="1"/>
</dbReference>
<dbReference type="PROSITE" id="PS00277">
    <property type="entry name" value="STAPH_STREP_TOXIN_1"/>
    <property type="match status" value="1"/>
</dbReference>
<dbReference type="PROSITE" id="PS00278">
    <property type="entry name" value="STAPH_STREP_TOXIN_2"/>
    <property type="match status" value="1"/>
</dbReference>